<reference key="1">
    <citation type="submission" date="2009-03" db="EMBL/GenBank/DDBJ databases">
        <title>Complete genome sequence of Edwardsiella ictaluri 93-146.</title>
        <authorList>
            <person name="Williams M.L."/>
            <person name="Gillaspy A.F."/>
            <person name="Dyer D.W."/>
            <person name="Thune R.L."/>
            <person name="Waldbieser G.C."/>
            <person name="Schuster S.C."/>
            <person name="Gipson J."/>
            <person name="Zaitshik J."/>
            <person name="Landry C."/>
            <person name="Lawrence M.L."/>
        </authorList>
    </citation>
    <scope>NUCLEOTIDE SEQUENCE [LARGE SCALE GENOMIC DNA]</scope>
    <source>
        <strain>93-146</strain>
    </source>
</reference>
<accession>C5B7R2</accession>
<dbReference type="EC" id="4.2.1.33" evidence="1"/>
<dbReference type="EMBL" id="CP001600">
    <property type="protein sequence ID" value="ACR67939.1"/>
    <property type="molecule type" value="Genomic_DNA"/>
</dbReference>
<dbReference type="RefSeq" id="WP_015870132.1">
    <property type="nucleotide sequence ID" value="NZ_CP169062.1"/>
</dbReference>
<dbReference type="SMR" id="C5B7R2"/>
<dbReference type="STRING" id="67780.B6E78_14225"/>
<dbReference type="GeneID" id="69537780"/>
<dbReference type="KEGG" id="eic:NT01EI_0718"/>
<dbReference type="PATRIC" id="fig|634503.3.peg.647"/>
<dbReference type="HOGENOM" id="CLU_006714_3_4_6"/>
<dbReference type="OrthoDB" id="9802769at2"/>
<dbReference type="UniPathway" id="UPA00048">
    <property type="reaction ID" value="UER00071"/>
</dbReference>
<dbReference type="Proteomes" id="UP000001485">
    <property type="component" value="Chromosome"/>
</dbReference>
<dbReference type="GO" id="GO:0003861">
    <property type="term" value="F:3-isopropylmalate dehydratase activity"/>
    <property type="evidence" value="ECO:0007669"/>
    <property type="project" value="UniProtKB-UniRule"/>
</dbReference>
<dbReference type="GO" id="GO:0051539">
    <property type="term" value="F:4 iron, 4 sulfur cluster binding"/>
    <property type="evidence" value="ECO:0007669"/>
    <property type="project" value="UniProtKB-KW"/>
</dbReference>
<dbReference type="GO" id="GO:0046872">
    <property type="term" value="F:metal ion binding"/>
    <property type="evidence" value="ECO:0007669"/>
    <property type="project" value="UniProtKB-KW"/>
</dbReference>
<dbReference type="GO" id="GO:0009098">
    <property type="term" value="P:L-leucine biosynthetic process"/>
    <property type="evidence" value="ECO:0007669"/>
    <property type="project" value="UniProtKB-UniRule"/>
</dbReference>
<dbReference type="CDD" id="cd01583">
    <property type="entry name" value="IPMI"/>
    <property type="match status" value="1"/>
</dbReference>
<dbReference type="FunFam" id="3.30.499.10:FF:000006">
    <property type="entry name" value="3-isopropylmalate dehydratase large subunit"/>
    <property type="match status" value="1"/>
</dbReference>
<dbReference type="FunFam" id="3.30.499.10:FF:000007">
    <property type="entry name" value="3-isopropylmalate dehydratase large subunit"/>
    <property type="match status" value="1"/>
</dbReference>
<dbReference type="Gene3D" id="3.30.499.10">
    <property type="entry name" value="Aconitase, domain 3"/>
    <property type="match status" value="2"/>
</dbReference>
<dbReference type="HAMAP" id="MF_01026">
    <property type="entry name" value="LeuC_type1"/>
    <property type="match status" value="1"/>
</dbReference>
<dbReference type="InterPro" id="IPR004430">
    <property type="entry name" value="3-IsopropMal_deHydase_lsu"/>
</dbReference>
<dbReference type="InterPro" id="IPR015931">
    <property type="entry name" value="Acnase/IPM_dHydase_lsu_aba_1/3"/>
</dbReference>
<dbReference type="InterPro" id="IPR001030">
    <property type="entry name" value="Acoase/IPM_deHydtase_lsu_aba"/>
</dbReference>
<dbReference type="InterPro" id="IPR018136">
    <property type="entry name" value="Aconitase_4Fe-4S_BS"/>
</dbReference>
<dbReference type="InterPro" id="IPR036008">
    <property type="entry name" value="Aconitase_4Fe-4S_dom"/>
</dbReference>
<dbReference type="InterPro" id="IPR050067">
    <property type="entry name" value="IPM_dehydratase_rel_enz"/>
</dbReference>
<dbReference type="InterPro" id="IPR033941">
    <property type="entry name" value="IPMI_cat"/>
</dbReference>
<dbReference type="NCBIfam" id="TIGR00170">
    <property type="entry name" value="leuC"/>
    <property type="match status" value="1"/>
</dbReference>
<dbReference type="NCBIfam" id="NF004016">
    <property type="entry name" value="PRK05478.1"/>
    <property type="match status" value="1"/>
</dbReference>
<dbReference type="NCBIfam" id="NF009116">
    <property type="entry name" value="PRK12466.1"/>
    <property type="match status" value="1"/>
</dbReference>
<dbReference type="PANTHER" id="PTHR43822:SF9">
    <property type="entry name" value="3-ISOPROPYLMALATE DEHYDRATASE"/>
    <property type="match status" value="1"/>
</dbReference>
<dbReference type="PANTHER" id="PTHR43822">
    <property type="entry name" value="HOMOACONITASE, MITOCHONDRIAL-RELATED"/>
    <property type="match status" value="1"/>
</dbReference>
<dbReference type="Pfam" id="PF00330">
    <property type="entry name" value="Aconitase"/>
    <property type="match status" value="1"/>
</dbReference>
<dbReference type="PRINTS" id="PR00415">
    <property type="entry name" value="ACONITASE"/>
</dbReference>
<dbReference type="SUPFAM" id="SSF53732">
    <property type="entry name" value="Aconitase iron-sulfur domain"/>
    <property type="match status" value="1"/>
</dbReference>
<dbReference type="PROSITE" id="PS00450">
    <property type="entry name" value="ACONITASE_1"/>
    <property type="match status" value="1"/>
</dbReference>
<dbReference type="PROSITE" id="PS01244">
    <property type="entry name" value="ACONITASE_2"/>
    <property type="match status" value="1"/>
</dbReference>
<protein>
    <recommendedName>
        <fullName evidence="1">3-isopropylmalate dehydratase large subunit</fullName>
        <ecNumber evidence="1">4.2.1.33</ecNumber>
    </recommendedName>
    <alternativeName>
        <fullName evidence="1">Alpha-IPM isomerase</fullName>
        <shortName evidence="1">IPMI</shortName>
    </alternativeName>
    <alternativeName>
        <fullName evidence="1">Isopropylmalate isomerase</fullName>
    </alternativeName>
</protein>
<keyword id="KW-0004">4Fe-4S</keyword>
<keyword id="KW-0028">Amino-acid biosynthesis</keyword>
<keyword id="KW-0100">Branched-chain amino acid biosynthesis</keyword>
<keyword id="KW-0408">Iron</keyword>
<keyword id="KW-0411">Iron-sulfur</keyword>
<keyword id="KW-0432">Leucine biosynthesis</keyword>
<keyword id="KW-0456">Lyase</keyword>
<keyword id="KW-0479">Metal-binding</keyword>
<name>LEUC_EDWI9</name>
<sequence length="471" mass="50778">MGKTLYQKLYDAHIVHQTPGETPLLYIDRHLVHEVTSPQAFDGLRAQRRRVRRPEHTFATMDHNVSTQSRDIHACGEMARVQMETLMANCREFGVQLYDLHHPHQGIVHVIGPEQGMTLPGSTIVCGDSHTATHGAFGALAFGIGTSEVEHVLATQTLKQDRARTMQVVIQGRCAEGISAKDIVLAVIGHLGHAGGTGYVVEFCGPAVEALSMEGRMTLCNMAIELGAKAGLIAPDETTFAYLQGRPFAPQGAQWQQAVDHWRTLRSDADARYDRTVTLQADDIAPQVTWGTNPGQVIAIDTPIPSPASLSDPIARASAHKALAYMDLQPGTRMSDVAIDRVFIGSCTNSRIEDLRAAAAVARGRRVAPGVQAMVVPGSGPVKAQAEAEGLDKIFTEAGFEWRLPGCSMCLAMNNDRLGSGERCASTSNRNFEGRQGRGGRTHLVSPAMAAAAAVCGHFADIRQFQEPAHD</sequence>
<comment type="function">
    <text evidence="1">Catalyzes the isomerization between 2-isopropylmalate and 3-isopropylmalate, via the formation of 2-isopropylmaleate.</text>
</comment>
<comment type="catalytic activity">
    <reaction evidence="1">
        <text>(2R,3S)-3-isopropylmalate = (2S)-2-isopropylmalate</text>
        <dbReference type="Rhea" id="RHEA:32287"/>
        <dbReference type="ChEBI" id="CHEBI:1178"/>
        <dbReference type="ChEBI" id="CHEBI:35121"/>
        <dbReference type="EC" id="4.2.1.33"/>
    </reaction>
</comment>
<comment type="cofactor">
    <cofactor evidence="1">
        <name>[4Fe-4S] cluster</name>
        <dbReference type="ChEBI" id="CHEBI:49883"/>
    </cofactor>
    <text evidence="1">Binds 1 [4Fe-4S] cluster per subunit.</text>
</comment>
<comment type="pathway">
    <text evidence="1">Amino-acid biosynthesis; L-leucine biosynthesis; L-leucine from 3-methyl-2-oxobutanoate: step 2/4.</text>
</comment>
<comment type="subunit">
    <text evidence="1">Heterodimer of LeuC and LeuD.</text>
</comment>
<comment type="similarity">
    <text evidence="1">Belongs to the aconitase/IPM isomerase family. LeuC type 1 subfamily.</text>
</comment>
<gene>
    <name evidence="1" type="primary">leuC</name>
    <name type="ordered locus">NT01EI_0718</name>
</gene>
<feature type="chain" id="PRO_1000213327" description="3-isopropylmalate dehydratase large subunit">
    <location>
        <begin position="1"/>
        <end position="471"/>
    </location>
</feature>
<feature type="binding site" evidence="1">
    <location>
        <position position="347"/>
    </location>
    <ligand>
        <name>[4Fe-4S] cluster</name>
        <dbReference type="ChEBI" id="CHEBI:49883"/>
    </ligand>
</feature>
<feature type="binding site" evidence="1">
    <location>
        <position position="407"/>
    </location>
    <ligand>
        <name>[4Fe-4S] cluster</name>
        <dbReference type="ChEBI" id="CHEBI:49883"/>
    </ligand>
</feature>
<feature type="binding site" evidence="1">
    <location>
        <position position="410"/>
    </location>
    <ligand>
        <name>[4Fe-4S] cluster</name>
        <dbReference type="ChEBI" id="CHEBI:49883"/>
    </ligand>
</feature>
<proteinExistence type="inferred from homology"/>
<organism>
    <name type="scientific">Edwardsiella ictaluri (strain 93-146)</name>
    <dbReference type="NCBI Taxonomy" id="634503"/>
    <lineage>
        <taxon>Bacteria</taxon>
        <taxon>Pseudomonadati</taxon>
        <taxon>Pseudomonadota</taxon>
        <taxon>Gammaproteobacteria</taxon>
        <taxon>Enterobacterales</taxon>
        <taxon>Hafniaceae</taxon>
        <taxon>Edwardsiella</taxon>
    </lineage>
</organism>
<evidence type="ECO:0000255" key="1">
    <source>
        <dbReference type="HAMAP-Rule" id="MF_01026"/>
    </source>
</evidence>